<protein>
    <recommendedName>
        <fullName evidence="1">Nucleoid-associated protein PPA0205</fullName>
    </recommendedName>
</protein>
<proteinExistence type="inferred from homology"/>
<name>Y205_CUTAK</name>
<keyword id="KW-0963">Cytoplasm</keyword>
<keyword id="KW-0238">DNA-binding</keyword>
<sequence>MTTGGFDLGGLDIGALLAQAQSVQNQLEAAQNQLAESNFEGTAGGGLVRATVTGTGELDALTIAPEALEDTDAETLADLVVAAVKDATGQARAMQQSLMPQMPSLGL</sequence>
<feature type="chain" id="PRO_1000197671" description="Nucleoid-associated protein PPA0205">
    <location>
        <begin position="1"/>
        <end position="107"/>
    </location>
</feature>
<comment type="function">
    <text evidence="1">Binds to DNA and alters its conformation. May be involved in regulation of gene expression, nucleoid organization and DNA protection.</text>
</comment>
<comment type="subunit">
    <text evidence="1">Homodimer.</text>
</comment>
<comment type="subcellular location">
    <subcellularLocation>
        <location evidence="1">Cytoplasm</location>
        <location evidence="1">Nucleoid</location>
    </subcellularLocation>
</comment>
<comment type="similarity">
    <text evidence="1">Belongs to the YbaB/EbfC family.</text>
</comment>
<evidence type="ECO:0000255" key="1">
    <source>
        <dbReference type="HAMAP-Rule" id="MF_00274"/>
    </source>
</evidence>
<gene>
    <name type="ordered locus">PPA0205</name>
</gene>
<reference key="1">
    <citation type="journal article" date="2004" name="Science">
        <title>The complete genome sequence of Propionibacterium acnes, a commensal of human skin.</title>
        <authorList>
            <person name="Brueggemann H."/>
            <person name="Henne A."/>
            <person name="Hoster F."/>
            <person name="Liesegang H."/>
            <person name="Wiezer A."/>
            <person name="Strittmatter A."/>
            <person name="Hujer S."/>
            <person name="Duerre P."/>
            <person name="Gottschalk G."/>
        </authorList>
    </citation>
    <scope>NUCLEOTIDE SEQUENCE [LARGE SCALE GENOMIC DNA]</scope>
    <source>
        <strain>DSM 16379 / KPA171202</strain>
    </source>
</reference>
<accession>Q6ABA0</accession>
<dbReference type="EMBL" id="AE017283">
    <property type="protein sequence ID" value="AAT81966.1"/>
    <property type="molecule type" value="Genomic_DNA"/>
</dbReference>
<dbReference type="RefSeq" id="WP_002517365.1">
    <property type="nucleotide sequence ID" value="NZ_CP025935.1"/>
</dbReference>
<dbReference type="SMR" id="Q6ABA0"/>
<dbReference type="EnsemblBacteria" id="AAT81966">
    <property type="protein sequence ID" value="AAT81966"/>
    <property type="gene ID" value="PPA0205"/>
</dbReference>
<dbReference type="KEGG" id="pac:PPA0205"/>
<dbReference type="eggNOG" id="COG0718">
    <property type="taxonomic scope" value="Bacteria"/>
</dbReference>
<dbReference type="HOGENOM" id="CLU_140930_4_1_11"/>
<dbReference type="Proteomes" id="UP000000603">
    <property type="component" value="Chromosome"/>
</dbReference>
<dbReference type="GO" id="GO:0043590">
    <property type="term" value="C:bacterial nucleoid"/>
    <property type="evidence" value="ECO:0007669"/>
    <property type="project" value="UniProtKB-UniRule"/>
</dbReference>
<dbReference type="GO" id="GO:0005829">
    <property type="term" value="C:cytosol"/>
    <property type="evidence" value="ECO:0007669"/>
    <property type="project" value="TreeGrafter"/>
</dbReference>
<dbReference type="GO" id="GO:0003677">
    <property type="term" value="F:DNA binding"/>
    <property type="evidence" value="ECO:0007669"/>
    <property type="project" value="UniProtKB-UniRule"/>
</dbReference>
<dbReference type="Gene3D" id="3.30.1310.10">
    <property type="entry name" value="Nucleoid-associated protein YbaB-like domain"/>
    <property type="match status" value="1"/>
</dbReference>
<dbReference type="HAMAP" id="MF_00274">
    <property type="entry name" value="DNA_YbaB_EbfC"/>
    <property type="match status" value="1"/>
</dbReference>
<dbReference type="InterPro" id="IPR036894">
    <property type="entry name" value="YbaB-like_sf"/>
</dbReference>
<dbReference type="InterPro" id="IPR004401">
    <property type="entry name" value="YbaB/EbfC"/>
</dbReference>
<dbReference type="NCBIfam" id="TIGR00103">
    <property type="entry name" value="DNA_YbaB_EbfC"/>
    <property type="match status" value="1"/>
</dbReference>
<dbReference type="PANTHER" id="PTHR33449">
    <property type="entry name" value="NUCLEOID-ASSOCIATED PROTEIN YBAB"/>
    <property type="match status" value="1"/>
</dbReference>
<dbReference type="PANTHER" id="PTHR33449:SF1">
    <property type="entry name" value="NUCLEOID-ASSOCIATED PROTEIN YBAB"/>
    <property type="match status" value="1"/>
</dbReference>
<dbReference type="Pfam" id="PF02575">
    <property type="entry name" value="YbaB_DNA_bd"/>
    <property type="match status" value="1"/>
</dbReference>
<dbReference type="PIRSF" id="PIRSF004555">
    <property type="entry name" value="UCP004555"/>
    <property type="match status" value="1"/>
</dbReference>
<dbReference type="SUPFAM" id="SSF82607">
    <property type="entry name" value="YbaB-like"/>
    <property type="match status" value="1"/>
</dbReference>
<organism>
    <name type="scientific">Cutibacterium acnes (strain DSM 16379 / KPA171202)</name>
    <name type="common">Propionibacterium acnes</name>
    <dbReference type="NCBI Taxonomy" id="267747"/>
    <lineage>
        <taxon>Bacteria</taxon>
        <taxon>Bacillati</taxon>
        <taxon>Actinomycetota</taxon>
        <taxon>Actinomycetes</taxon>
        <taxon>Propionibacteriales</taxon>
        <taxon>Propionibacteriaceae</taxon>
        <taxon>Cutibacterium</taxon>
    </lineage>
</organism>